<comment type="function">
    <text evidence="2">Oxidosqualene cyclase involved in the biosynthesis of lupeol.</text>
</comment>
<comment type="catalytic activity">
    <reaction evidence="2">
        <text>(S)-2,3-epoxysqualene = lupeol</text>
        <dbReference type="Rhea" id="RHEA:31383"/>
        <dbReference type="ChEBI" id="CHEBI:6570"/>
        <dbReference type="ChEBI" id="CHEBI:15441"/>
        <dbReference type="EC" id="5.4.99.41"/>
    </reaction>
</comment>
<comment type="similarity">
    <text evidence="3">Belongs to the terpene cyclase/mutase family.</text>
</comment>
<keyword id="KW-0413">Isomerase</keyword>
<keyword id="KW-0677">Repeat</keyword>
<evidence type="ECO:0000250" key="1">
    <source>
        <dbReference type="UniProtKB" id="P48449"/>
    </source>
</evidence>
<evidence type="ECO:0000269" key="2">
    <source>
    </source>
</evidence>
<evidence type="ECO:0000305" key="3"/>
<accession>Q8W3Z2</accession>
<reference key="1">
    <citation type="journal article" date="2003" name="Biol. Pharm. Bull.">
        <title>Oxidosqualene cyclases from cell suspension cultures of Betula platyphylla var. japonica: molecular evolution of oxidosqualene cyclases in higher plants.</title>
        <authorList>
            <person name="Zhang H."/>
            <person name="Shibuya M."/>
            <person name="Yokota S."/>
            <person name="Ebizuka Y."/>
        </authorList>
    </citation>
    <scope>NUCLEOTIDE SEQUENCE [MRNA]</scope>
    <scope>FUNCTION</scope>
    <scope>CATALYTIC ACTIVITY</scope>
</reference>
<organism>
    <name type="scientific">Betula platyphylla</name>
    <name type="common">Asian white birch</name>
    <dbReference type="NCBI Taxonomy" id="78630"/>
    <lineage>
        <taxon>Eukaryota</taxon>
        <taxon>Viridiplantae</taxon>
        <taxon>Streptophyta</taxon>
        <taxon>Embryophyta</taxon>
        <taxon>Tracheophyta</taxon>
        <taxon>Spermatophyta</taxon>
        <taxon>Magnoliopsida</taxon>
        <taxon>eudicotyledons</taxon>
        <taxon>Gunneridae</taxon>
        <taxon>Pentapetalae</taxon>
        <taxon>rosids</taxon>
        <taxon>fabids</taxon>
        <taxon>Fagales</taxon>
        <taxon>Betulaceae</taxon>
        <taxon>Betula</taxon>
    </lineage>
</organism>
<sequence>MWKLKIAEGGPGLVSGNDFIGRQHWEFDPDAGTPQERAEVEKVREEFTKNRFQMKQSADLLMRMQLRKENPCQPIPPPVKVKETEVITEEAVITTLRRSLSFYSSIQAHDGHWPGESAGPLFFLQPFVMALYITGDLNTIFSPAHQKEIIRYLYNHQNEDGGWGFHIEGHSTMFGSALSYIALRILGEGLEDGEDGAMAKSRKWILDHGGLVAIPSWGKFWVTVLGLYEWSGCNPLPPEFWFLPDIFPIHPGKMLCYCRLVYMPMSYLYGKRFVGPITGLIQSLRQELYNEPYHQINWNKARSTVAKEDLYYPHPLIQDLLWGFLHHVAEPVLTRWPFSMLREKALKAAIGHVHYEDENSKYLCIGSVEKVLCLIACWAEDPNGEAYKLHLGRIPDNYWVAEDGLKIQSFGCQMWDAGFAIQAILSCNLNEEYWPTLRKAHEFVKASQVPENPSGDFKAMYRHINKGAWTFSMQDHGWQVSDCTAEGLKVAILFSQMPPDLVGEKIEKERLYDAVNVILSLQSSNGGFPAWEPQRAYGWLEKFNPTEFFEDTLIEREYVECTSPAVHGLALFRKFYPRHRGTEIDSSIYRGIQYIEDVQEPDGSWYGHWGICYTYGTWFAVGALAACGRNYKNCPALRKSCEFLLSKQLPNGGWGESYLSSQNKVWTNIEGNRANLVQTAWALLSLIDARQAEIDPTPIHRGVRVLINSQMEDGDFPQQEITGVFMRNCTLNYSSYRNIFPIWALGEYRRRVLFA</sequence>
<protein>
    <recommendedName>
        <fullName>Lupeol synthase</fullName>
        <ecNumber>5.4.99.41</ecNumber>
    </recommendedName>
</protein>
<proteinExistence type="evidence at protein level"/>
<dbReference type="EC" id="5.4.99.41"/>
<dbReference type="EMBL" id="AB055511">
    <property type="protein sequence ID" value="BAB83087.1"/>
    <property type="molecule type" value="mRNA"/>
</dbReference>
<dbReference type="SMR" id="Q8W3Z2"/>
<dbReference type="KEGG" id="ag:BAB83087"/>
<dbReference type="BRENDA" id="5.4.99.41">
    <property type="organism ID" value="9789"/>
</dbReference>
<dbReference type="GO" id="GO:0005811">
    <property type="term" value="C:lipid droplet"/>
    <property type="evidence" value="ECO:0007669"/>
    <property type="project" value="InterPro"/>
</dbReference>
<dbReference type="GO" id="GO:0042299">
    <property type="term" value="F:lupeol synthase activity"/>
    <property type="evidence" value="ECO:0000314"/>
    <property type="project" value="UniProtKB"/>
</dbReference>
<dbReference type="GO" id="GO:0019745">
    <property type="term" value="P:pentacyclic triterpenoid biosynthetic process"/>
    <property type="evidence" value="ECO:0000314"/>
    <property type="project" value="UniProtKB"/>
</dbReference>
<dbReference type="CDD" id="cd02892">
    <property type="entry name" value="SQCY_1"/>
    <property type="match status" value="1"/>
</dbReference>
<dbReference type="FunFam" id="1.50.10.20:FF:000044">
    <property type="entry name" value="Lupeol synthase"/>
    <property type="match status" value="1"/>
</dbReference>
<dbReference type="FunFam" id="1.50.10.20:FF:000011">
    <property type="entry name" value="Terpene cyclase/mutase family member"/>
    <property type="match status" value="1"/>
</dbReference>
<dbReference type="Gene3D" id="1.50.10.20">
    <property type="match status" value="2"/>
</dbReference>
<dbReference type="InterPro" id="IPR032696">
    <property type="entry name" value="SQ_cyclase_C"/>
</dbReference>
<dbReference type="InterPro" id="IPR032697">
    <property type="entry name" value="SQ_cyclase_N"/>
</dbReference>
<dbReference type="InterPro" id="IPR018333">
    <property type="entry name" value="Squalene_cyclase"/>
</dbReference>
<dbReference type="InterPro" id="IPR002365">
    <property type="entry name" value="Terpene_synthase_CS"/>
</dbReference>
<dbReference type="InterPro" id="IPR008930">
    <property type="entry name" value="Terpenoid_cyclase/PrenylTrfase"/>
</dbReference>
<dbReference type="NCBIfam" id="TIGR01787">
    <property type="entry name" value="squalene_cyclas"/>
    <property type="match status" value="1"/>
</dbReference>
<dbReference type="PANTHER" id="PTHR11764">
    <property type="entry name" value="TERPENE CYCLASE/MUTASE FAMILY MEMBER"/>
    <property type="match status" value="1"/>
</dbReference>
<dbReference type="PANTHER" id="PTHR11764:SF19">
    <property type="entry name" value="TERPENE CYCLASE_MUTASE FAMILY MEMBER"/>
    <property type="match status" value="1"/>
</dbReference>
<dbReference type="Pfam" id="PF13243">
    <property type="entry name" value="SQHop_cyclase_C"/>
    <property type="match status" value="1"/>
</dbReference>
<dbReference type="Pfam" id="PF13249">
    <property type="entry name" value="SQHop_cyclase_N"/>
    <property type="match status" value="1"/>
</dbReference>
<dbReference type="SFLD" id="SFLDG01016">
    <property type="entry name" value="Prenyltransferase_Like_2"/>
    <property type="match status" value="1"/>
</dbReference>
<dbReference type="SUPFAM" id="SSF48239">
    <property type="entry name" value="Terpenoid cyclases/Protein prenyltransferases"/>
    <property type="match status" value="2"/>
</dbReference>
<dbReference type="PROSITE" id="PS01074">
    <property type="entry name" value="TERPENE_SYNTHASES"/>
    <property type="match status" value="1"/>
</dbReference>
<name>LUPS_BETPL</name>
<feature type="chain" id="PRO_0000413994" description="Lupeol synthase">
    <location>
        <begin position="1"/>
        <end position="755"/>
    </location>
</feature>
<feature type="repeat" description="PFTB 1">
    <location>
        <begin position="146"/>
        <end position="187"/>
    </location>
</feature>
<feature type="repeat" description="PFTB 2">
    <location>
        <begin position="511"/>
        <end position="552"/>
    </location>
</feature>
<feature type="repeat" description="PFTB 3">
    <location>
        <begin position="588"/>
        <end position="628"/>
    </location>
</feature>
<feature type="repeat" description="PFTB 4">
    <location>
        <begin position="637"/>
        <end position="678"/>
    </location>
</feature>
<feature type="active site" description="Proton donor" evidence="1">
    <location>
        <position position="482"/>
    </location>
</feature>
<gene>
    <name type="primary">OSCBPW</name>
</gene>